<geneLocation type="chloroplast"/>
<proteinExistence type="inferred from homology"/>
<comment type="function">
    <text evidence="1">One of the primary rRNA binding proteins, it binds directly to 16S rRNA where it nucleates assembly of the head domain of the 30S subunit.</text>
</comment>
<comment type="subunit">
    <text>Part of the 30S ribosomal subunit.</text>
</comment>
<comment type="subcellular location">
    <subcellularLocation>
        <location>Plastid</location>
        <location>Chloroplast</location>
    </subcellularLocation>
</comment>
<comment type="similarity">
    <text evidence="2">Belongs to the universal ribosomal protein uS7 family.</text>
</comment>
<evidence type="ECO:0000250" key="1"/>
<evidence type="ECO:0000305" key="2"/>
<dbReference type="EMBL" id="AY237140">
    <property type="protein sequence ID" value="AAQ64557.1"/>
    <property type="molecule type" value="Genomic_DNA"/>
</dbReference>
<dbReference type="RefSeq" id="YP_004563913.1">
    <property type="nucleotide sequence ID" value="NC_015605.1"/>
</dbReference>
<dbReference type="RefSeq" id="YP_004563926.1">
    <property type="nucleotide sequence ID" value="NC_015605.1"/>
</dbReference>
<dbReference type="SMR" id="Q6EM84"/>
<dbReference type="GeneID" id="10743508"/>
<dbReference type="GeneID" id="10743585"/>
<dbReference type="GO" id="GO:0009507">
    <property type="term" value="C:chloroplast"/>
    <property type="evidence" value="ECO:0007669"/>
    <property type="project" value="UniProtKB-SubCell"/>
</dbReference>
<dbReference type="GO" id="GO:0015935">
    <property type="term" value="C:small ribosomal subunit"/>
    <property type="evidence" value="ECO:0007669"/>
    <property type="project" value="InterPro"/>
</dbReference>
<dbReference type="GO" id="GO:0019843">
    <property type="term" value="F:rRNA binding"/>
    <property type="evidence" value="ECO:0007669"/>
    <property type="project" value="UniProtKB-UniRule"/>
</dbReference>
<dbReference type="GO" id="GO:0003735">
    <property type="term" value="F:structural constituent of ribosome"/>
    <property type="evidence" value="ECO:0007669"/>
    <property type="project" value="InterPro"/>
</dbReference>
<dbReference type="GO" id="GO:0006412">
    <property type="term" value="P:translation"/>
    <property type="evidence" value="ECO:0007669"/>
    <property type="project" value="UniProtKB-UniRule"/>
</dbReference>
<dbReference type="CDD" id="cd14871">
    <property type="entry name" value="uS7_Chloroplast"/>
    <property type="match status" value="1"/>
</dbReference>
<dbReference type="FunFam" id="1.10.455.10:FF:000001">
    <property type="entry name" value="30S ribosomal protein S7"/>
    <property type="match status" value="1"/>
</dbReference>
<dbReference type="Gene3D" id="1.10.455.10">
    <property type="entry name" value="Ribosomal protein S7 domain"/>
    <property type="match status" value="1"/>
</dbReference>
<dbReference type="HAMAP" id="MF_00480_B">
    <property type="entry name" value="Ribosomal_uS7_B"/>
    <property type="match status" value="1"/>
</dbReference>
<dbReference type="InterPro" id="IPR000235">
    <property type="entry name" value="Ribosomal_uS7"/>
</dbReference>
<dbReference type="InterPro" id="IPR005717">
    <property type="entry name" value="Ribosomal_uS7_bac/org-type"/>
</dbReference>
<dbReference type="InterPro" id="IPR020606">
    <property type="entry name" value="Ribosomal_uS7_CS"/>
</dbReference>
<dbReference type="InterPro" id="IPR023798">
    <property type="entry name" value="Ribosomal_uS7_dom"/>
</dbReference>
<dbReference type="InterPro" id="IPR036823">
    <property type="entry name" value="Ribosomal_uS7_dom_sf"/>
</dbReference>
<dbReference type="NCBIfam" id="TIGR01029">
    <property type="entry name" value="rpsG_bact"/>
    <property type="match status" value="1"/>
</dbReference>
<dbReference type="PANTHER" id="PTHR11205">
    <property type="entry name" value="RIBOSOMAL PROTEIN S7"/>
    <property type="match status" value="1"/>
</dbReference>
<dbReference type="Pfam" id="PF00177">
    <property type="entry name" value="Ribosomal_S7"/>
    <property type="match status" value="1"/>
</dbReference>
<dbReference type="PIRSF" id="PIRSF002122">
    <property type="entry name" value="RPS7p_RPS7a_RPS5e_RPS7o"/>
    <property type="match status" value="1"/>
</dbReference>
<dbReference type="SUPFAM" id="SSF47973">
    <property type="entry name" value="Ribosomal protein S7"/>
    <property type="match status" value="1"/>
</dbReference>
<dbReference type="PROSITE" id="PS00052">
    <property type="entry name" value="RIBOSOMAL_S7"/>
    <property type="match status" value="1"/>
</dbReference>
<name>RR7_NELLU</name>
<keyword id="KW-0150">Chloroplast</keyword>
<keyword id="KW-0934">Plastid</keyword>
<keyword id="KW-0687">Ribonucleoprotein</keyword>
<keyword id="KW-0689">Ribosomal protein</keyword>
<keyword id="KW-0694">RNA-binding</keyword>
<keyword id="KW-0699">rRNA-binding</keyword>
<reference key="1">
    <citation type="submission" date="2003-02" db="EMBL/GenBank/DDBJ databases">
        <title>Parsing out signal and noise for seed-plant phylogenetic inference.</title>
        <authorList>
            <person name="Graham S.W."/>
            <person name="Rai H.S."/>
            <person name="Ikegami K."/>
            <person name="Reeves P.A."/>
            <person name="Olmstead R.G."/>
        </authorList>
    </citation>
    <scope>NUCLEOTIDE SEQUENCE [GENOMIC DNA]</scope>
</reference>
<accession>Q6EM84</accession>
<organism>
    <name type="scientific">Nelumbo lutea</name>
    <name type="common">American lotus</name>
    <name type="synonym">Nelumbo nucifera subsp. lutea</name>
    <dbReference type="NCBI Taxonomy" id="4431"/>
    <lineage>
        <taxon>Eukaryota</taxon>
        <taxon>Viridiplantae</taxon>
        <taxon>Streptophyta</taxon>
        <taxon>Embryophyta</taxon>
        <taxon>Tracheophyta</taxon>
        <taxon>Spermatophyta</taxon>
        <taxon>Magnoliopsida</taxon>
        <taxon>Proteales</taxon>
        <taxon>Nelumbonaceae</taxon>
        <taxon>Nelumbo</taxon>
    </lineage>
</organism>
<sequence length="155" mass="17361">MSRRGTAEEKTAKSDPIYRNRLVNMLVNRIMKHGKKSLAYQIIYRAVKKIQQKTETNPLSVLRQAIRGVTPDIAVKARRVGGSTHQVPIEIGSTQGKALAIRWLLGASRKRPGRNMAFKLSSELVDAAKGSGDAIRKKEETHRMAEANRAFAHFR</sequence>
<gene>
    <name type="primary">rps7</name>
</gene>
<feature type="chain" id="PRO_0000124477" description="Small ribosomal subunit protein uS7c">
    <location>
        <begin position="1"/>
        <end position="155"/>
    </location>
</feature>
<protein>
    <recommendedName>
        <fullName evidence="2">Small ribosomal subunit protein uS7c</fullName>
    </recommendedName>
    <alternativeName>
        <fullName>30S ribosomal protein S7, chloroplastic</fullName>
    </alternativeName>
</protein>